<name>NUON_RICBR</name>
<feature type="chain" id="PRO_0000272331" description="NADH-quinone oxidoreductase subunit N">
    <location>
        <begin position="1"/>
        <end position="460"/>
    </location>
</feature>
<feature type="transmembrane region" description="Helical" evidence="1">
    <location>
        <begin position="2"/>
        <end position="22"/>
    </location>
</feature>
<feature type="transmembrane region" description="Helical" evidence="1">
    <location>
        <begin position="28"/>
        <end position="48"/>
    </location>
</feature>
<feature type="transmembrane region" description="Helical" evidence="1">
    <location>
        <begin position="65"/>
        <end position="85"/>
    </location>
</feature>
<feature type="transmembrane region" description="Helical" evidence="1">
    <location>
        <begin position="104"/>
        <end position="124"/>
    </location>
</feature>
<feature type="transmembrane region" description="Helical" evidence="1">
    <location>
        <begin position="155"/>
        <end position="175"/>
    </location>
</feature>
<feature type="transmembrane region" description="Helical" evidence="1">
    <location>
        <begin position="196"/>
        <end position="216"/>
    </location>
</feature>
<feature type="transmembrane region" description="Helical" evidence="1">
    <location>
        <begin position="230"/>
        <end position="250"/>
    </location>
</feature>
<feature type="transmembrane region" description="Helical" evidence="1">
    <location>
        <begin position="263"/>
        <end position="283"/>
    </location>
</feature>
<feature type="transmembrane region" description="Helical" evidence="1">
    <location>
        <begin position="292"/>
        <end position="312"/>
    </location>
</feature>
<feature type="transmembrane region" description="Helical" evidence="1">
    <location>
        <begin position="321"/>
        <end position="341"/>
    </location>
</feature>
<feature type="transmembrane region" description="Helical" evidence="1">
    <location>
        <begin position="363"/>
        <end position="383"/>
    </location>
</feature>
<feature type="transmembrane region" description="Helical" evidence="1">
    <location>
        <begin position="400"/>
        <end position="420"/>
    </location>
</feature>
<feature type="transmembrane region" description="Helical" evidence="1">
    <location>
        <begin position="438"/>
        <end position="458"/>
    </location>
</feature>
<accession>Q1RIF2</accession>
<reference key="1">
    <citation type="journal article" date="2006" name="PLoS Genet.">
        <title>Genome sequence of Rickettsia bellii illuminates the role of amoebae in gene exchanges between intracellular pathogens.</title>
        <authorList>
            <person name="Ogata H."/>
            <person name="La Scola B."/>
            <person name="Audic S."/>
            <person name="Renesto P."/>
            <person name="Blanc G."/>
            <person name="Robert C."/>
            <person name="Fournier P.-E."/>
            <person name="Claverie J.-M."/>
            <person name="Raoult D."/>
        </authorList>
    </citation>
    <scope>NUCLEOTIDE SEQUENCE [LARGE SCALE GENOMIC DNA]</scope>
    <source>
        <strain>RML369-C</strain>
    </source>
</reference>
<keyword id="KW-0997">Cell inner membrane</keyword>
<keyword id="KW-1003">Cell membrane</keyword>
<keyword id="KW-0472">Membrane</keyword>
<keyword id="KW-0520">NAD</keyword>
<keyword id="KW-0874">Quinone</keyword>
<keyword id="KW-1278">Translocase</keyword>
<keyword id="KW-0812">Transmembrane</keyword>
<keyword id="KW-1133">Transmembrane helix</keyword>
<keyword id="KW-0813">Transport</keyword>
<keyword id="KW-0830">Ubiquinone</keyword>
<sequence length="460" mass="50893">MLLPEITLTLTALLSQFFAVMLQGKNRIVANITILLTILTIFIILKYSYSESVLYLDYVMFTTNANIANYKAIILIFTIISMIIYRDYSVRSGEPLKFEFITLILLSTVGIFVAISAQNFLLLFCAMELTALTSYILAGFKLSDIKSSEGALKYFILGSLVSCLSLFGISFIYGFGGSLQFSDIFYKLNDSSSVNLGLVIGVVLFLSSIFFKLSSAPLHFWAPDVYEGSPIASVTYFTAASKIGAVAILLNIENLIIKNYHPISYNLIKIIALLSMIFGALGAIRQTSLKRLMAYSTILNIGYVLIGVLLRTEDGNKAAMLYMLIYAAASIGFFTCLIMLLGNQTDKANFESIQGIAENHKAIAAAICIIMFSMIGIPPLAGFLGKYYLFYQAITQEEFLLAYFGIFTSVIAAFYYLKIIKTMYFAEKPNPTKIPISYGLLLINFVVIGFLLFGSFIISS</sequence>
<dbReference type="EC" id="7.1.1.-" evidence="1"/>
<dbReference type="EMBL" id="CP000087">
    <property type="protein sequence ID" value="ABE04862.1"/>
    <property type="molecule type" value="Genomic_DNA"/>
</dbReference>
<dbReference type="RefSeq" id="WP_011477449.1">
    <property type="nucleotide sequence ID" value="NC_007940.1"/>
</dbReference>
<dbReference type="SMR" id="Q1RIF2"/>
<dbReference type="KEGG" id="rbe:RBE_0781"/>
<dbReference type="eggNOG" id="COG1007">
    <property type="taxonomic scope" value="Bacteria"/>
</dbReference>
<dbReference type="HOGENOM" id="CLU_007100_1_3_5"/>
<dbReference type="OrthoDB" id="9811718at2"/>
<dbReference type="Proteomes" id="UP000001951">
    <property type="component" value="Chromosome"/>
</dbReference>
<dbReference type="GO" id="GO:0005886">
    <property type="term" value="C:plasma membrane"/>
    <property type="evidence" value="ECO:0007669"/>
    <property type="project" value="UniProtKB-SubCell"/>
</dbReference>
<dbReference type="GO" id="GO:0008137">
    <property type="term" value="F:NADH dehydrogenase (ubiquinone) activity"/>
    <property type="evidence" value="ECO:0007669"/>
    <property type="project" value="InterPro"/>
</dbReference>
<dbReference type="GO" id="GO:0050136">
    <property type="term" value="F:NADH:ubiquinone reductase (non-electrogenic) activity"/>
    <property type="evidence" value="ECO:0007669"/>
    <property type="project" value="UniProtKB-UniRule"/>
</dbReference>
<dbReference type="GO" id="GO:0048038">
    <property type="term" value="F:quinone binding"/>
    <property type="evidence" value="ECO:0007669"/>
    <property type="project" value="UniProtKB-KW"/>
</dbReference>
<dbReference type="GO" id="GO:0042773">
    <property type="term" value="P:ATP synthesis coupled electron transport"/>
    <property type="evidence" value="ECO:0007669"/>
    <property type="project" value="InterPro"/>
</dbReference>
<dbReference type="HAMAP" id="MF_00445">
    <property type="entry name" value="NDH1_NuoN_1"/>
    <property type="match status" value="1"/>
</dbReference>
<dbReference type="InterPro" id="IPR010096">
    <property type="entry name" value="NADH-Q_OxRdtase_suN/2"/>
</dbReference>
<dbReference type="InterPro" id="IPR001750">
    <property type="entry name" value="ND/Mrp_TM"/>
</dbReference>
<dbReference type="NCBIfam" id="TIGR01770">
    <property type="entry name" value="NDH_I_N"/>
    <property type="match status" value="1"/>
</dbReference>
<dbReference type="NCBIfam" id="NF004447">
    <property type="entry name" value="PRK05777.2-5"/>
    <property type="match status" value="1"/>
</dbReference>
<dbReference type="PANTHER" id="PTHR22773">
    <property type="entry name" value="NADH DEHYDROGENASE"/>
    <property type="match status" value="1"/>
</dbReference>
<dbReference type="Pfam" id="PF00361">
    <property type="entry name" value="Proton_antipo_M"/>
    <property type="match status" value="1"/>
</dbReference>
<gene>
    <name evidence="1" type="primary">nuoN</name>
    <name type="ordered locus">RBE_0781</name>
</gene>
<evidence type="ECO:0000255" key="1">
    <source>
        <dbReference type="HAMAP-Rule" id="MF_00445"/>
    </source>
</evidence>
<organism>
    <name type="scientific">Rickettsia bellii (strain RML369-C)</name>
    <dbReference type="NCBI Taxonomy" id="336407"/>
    <lineage>
        <taxon>Bacteria</taxon>
        <taxon>Pseudomonadati</taxon>
        <taxon>Pseudomonadota</taxon>
        <taxon>Alphaproteobacteria</taxon>
        <taxon>Rickettsiales</taxon>
        <taxon>Rickettsiaceae</taxon>
        <taxon>Rickettsieae</taxon>
        <taxon>Rickettsia</taxon>
        <taxon>belli group</taxon>
    </lineage>
</organism>
<proteinExistence type="inferred from homology"/>
<comment type="function">
    <text evidence="1">NDH-1 shuttles electrons from NADH, via FMN and iron-sulfur (Fe-S) centers, to quinones in the respiratory chain. The immediate electron acceptor for the enzyme in this species is believed to be ubiquinone. Couples the redox reaction to proton translocation (for every two electrons transferred, four hydrogen ions are translocated across the cytoplasmic membrane), and thus conserves the redox energy in a proton gradient.</text>
</comment>
<comment type="catalytic activity">
    <reaction evidence="1">
        <text>a quinone + NADH + 5 H(+)(in) = a quinol + NAD(+) + 4 H(+)(out)</text>
        <dbReference type="Rhea" id="RHEA:57888"/>
        <dbReference type="ChEBI" id="CHEBI:15378"/>
        <dbReference type="ChEBI" id="CHEBI:24646"/>
        <dbReference type="ChEBI" id="CHEBI:57540"/>
        <dbReference type="ChEBI" id="CHEBI:57945"/>
        <dbReference type="ChEBI" id="CHEBI:132124"/>
    </reaction>
</comment>
<comment type="subunit">
    <text evidence="1">NDH-1 is composed of 14 different subunits. Subunits NuoA, H, J, K, L, M, N constitute the membrane sector of the complex.</text>
</comment>
<comment type="subcellular location">
    <subcellularLocation>
        <location evidence="1">Cell inner membrane</location>
        <topology evidence="1">Multi-pass membrane protein</topology>
    </subcellularLocation>
</comment>
<comment type="similarity">
    <text evidence="1">Belongs to the complex I subunit 2 family.</text>
</comment>
<protein>
    <recommendedName>
        <fullName evidence="1">NADH-quinone oxidoreductase subunit N</fullName>
        <ecNumber evidence="1">7.1.1.-</ecNumber>
    </recommendedName>
    <alternativeName>
        <fullName evidence="1">NADH dehydrogenase I subunit N</fullName>
    </alternativeName>
    <alternativeName>
        <fullName evidence="1">NDH-1 subunit N</fullName>
    </alternativeName>
</protein>